<feature type="chain" id="PRO_0000341818" description="2-succinyl-5-enolpyruvyl-6-hydroxy-3-cyclohexene-1-carboxylate synthase">
    <location>
        <begin position="1"/>
        <end position="556"/>
    </location>
</feature>
<dbReference type="EC" id="2.2.1.9" evidence="1"/>
<dbReference type="EMBL" id="AM420293">
    <property type="protein sequence ID" value="CAM06076.1"/>
    <property type="molecule type" value="Genomic_DNA"/>
</dbReference>
<dbReference type="RefSeq" id="WP_009944029.1">
    <property type="nucleotide sequence ID" value="NC_009142.1"/>
</dbReference>
<dbReference type="SMR" id="A4FPV1"/>
<dbReference type="STRING" id="405948.SACE_6913"/>
<dbReference type="KEGG" id="sen:SACE_6913"/>
<dbReference type="eggNOG" id="COG1165">
    <property type="taxonomic scope" value="Bacteria"/>
</dbReference>
<dbReference type="HOGENOM" id="CLU_006051_4_0_11"/>
<dbReference type="OrthoDB" id="9791859at2"/>
<dbReference type="UniPathway" id="UPA00079"/>
<dbReference type="UniPathway" id="UPA01057">
    <property type="reaction ID" value="UER00164"/>
</dbReference>
<dbReference type="Proteomes" id="UP000006728">
    <property type="component" value="Chromosome"/>
</dbReference>
<dbReference type="GO" id="GO:0070204">
    <property type="term" value="F:2-succinyl-5-enolpyruvyl-6-hydroxy-3-cyclohexene-1-carboxylic-acid synthase activity"/>
    <property type="evidence" value="ECO:0007669"/>
    <property type="project" value="UniProtKB-UniRule"/>
</dbReference>
<dbReference type="GO" id="GO:0000287">
    <property type="term" value="F:magnesium ion binding"/>
    <property type="evidence" value="ECO:0007669"/>
    <property type="project" value="UniProtKB-UniRule"/>
</dbReference>
<dbReference type="GO" id="GO:0030145">
    <property type="term" value="F:manganese ion binding"/>
    <property type="evidence" value="ECO:0007669"/>
    <property type="project" value="UniProtKB-UniRule"/>
</dbReference>
<dbReference type="GO" id="GO:0030976">
    <property type="term" value="F:thiamine pyrophosphate binding"/>
    <property type="evidence" value="ECO:0007669"/>
    <property type="project" value="UniProtKB-UniRule"/>
</dbReference>
<dbReference type="GO" id="GO:0009234">
    <property type="term" value="P:menaquinone biosynthetic process"/>
    <property type="evidence" value="ECO:0007669"/>
    <property type="project" value="UniProtKB-UniRule"/>
</dbReference>
<dbReference type="CDD" id="cd07037">
    <property type="entry name" value="TPP_PYR_MenD"/>
    <property type="match status" value="1"/>
</dbReference>
<dbReference type="CDD" id="cd02009">
    <property type="entry name" value="TPP_SHCHC_synthase"/>
    <property type="match status" value="1"/>
</dbReference>
<dbReference type="Gene3D" id="3.40.50.970">
    <property type="match status" value="2"/>
</dbReference>
<dbReference type="Gene3D" id="3.40.50.1220">
    <property type="entry name" value="TPP-binding domain"/>
    <property type="match status" value="1"/>
</dbReference>
<dbReference type="HAMAP" id="MF_01659">
    <property type="entry name" value="MenD"/>
    <property type="match status" value="1"/>
</dbReference>
<dbReference type="InterPro" id="IPR004433">
    <property type="entry name" value="MenaQ_synth_MenD"/>
</dbReference>
<dbReference type="InterPro" id="IPR029061">
    <property type="entry name" value="THDP-binding"/>
</dbReference>
<dbReference type="InterPro" id="IPR012001">
    <property type="entry name" value="Thiamin_PyroP_enz_TPP-bd_dom"/>
</dbReference>
<dbReference type="InterPro" id="IPR011766">
    <property type="entry name" value="TPP_enzyme_TPP-bd"/>
</dbReference>
<dbReference type="NCBIfam" id="TIGR00173">
    <property type="entry name" value="menD"/>
    <property type="match status" value="1"/>
</dbReference>
<dbReference type="PANTHER" id="PTHR42916">
    <property type="entry name" value="2-SUCCINYL-5-ENOLPYRUVYL-6-HYDROXY-3-CYCLOHEXENE-1-CARBOXYLATE SYNTHASE"/>
    <property type="match status" value="1"/>
</dbReference>
<dbReference type="PANTHER" id="PTHR42916:SF1">
    <property type="entry name" value="PROTEIN PHYLLO, CHLOROPLASTIC"/>
    <property type="match status" value="1"/>
</dbReference>
<dbReference type="Pfam" id="PF02775">
    <property type="entry name" value="TPP_enzyme_C"/>
    <property type="match status" value="1"/>
</dbReference>
<dbReference type="Pfam" id="PF02776">
    <property type="entry name" value="TPP_enzyme_N"/>
    <property type="match status" value="1"/>
</dbReference>
<dbReference type="PIRSF" id="PIRSF004983">
    <property type="entry name" value="MenD"/>
    <property type="match status" value="1"/>
</dbReference>
<dbReference type="SUPFAM" id="SSF52518">
    <property type="entry name" value="Thiamin diphosphate-binding fold (THDP-binding)"/>
    <property type="match status" value="2"/>
</dbReference>
<proteinExistence type="inferred from homology"/>
<name>MEND_SACEN</name>
<gene>
    <name evidence="1" type="primary">menD</name>
    <name type="ordered locus">SACE_6913</name>
</gene>
<organism>
    <name type="scientific">Saccharopolyspora erythraea (strain ATCC 11635 / DSM 40517 / JCM 4748 / NBRC 13426 / NCIMB 8594 / NRRL 2338)</name>
    <dbReference type="NCBI Taxonomy" id="405948"/>
    <lineage>
        <taxon>Bacteria</taxon>
        <taxon>Bacillati</taxon>
        <taxon>Actinomycetota</taxon>
        <taxon>Actinomycetes</taxon>
        <taxon>Pseudonocardiales</taxon>
        <taxon>Pseudonocardiaceae</taxon>
        <taxon>Saccharopolyspora</taxon>
    </lineage>
</organism>
<comment type="function">
    <text evidence="1">Catalyzes the thiamine diphosphate-dependent decarboxylation of 2-oxoglutarate and the subsequent addition of the resulting succinic semialdehyde-thiamine pyrophosphate anion to isochorismate to yield 2-succinyl-5-enolpyruvyl-6-hydroxy-3-cyclohexene-1-carboxylate (SEPHCHC).</text>
</comment>
<comment type="catalytic activity">
    <reaction evidence="1">
        <text>isochorismate + 2-oxoglutarate + H(+) = 5-enolpyruvoyl-6-hydroxy-2-succinyl-cyclohex-3-ene-1-carboxylate + CO2</text>
        <dbReference type="Rhea" id="RHEA:25593"/>
        <dbReference type="ChEBI" id="CHEBI:15378"/>
        <dbReference type="ChEBI" id="CHEBI:16526"/>
        <dbReference type="ChEBI" id="CHEBI:16810"/>
        <dbReference type="ChEBI" id="CHEBI:29780"/>
        <dbReference type="ChEBI" id="CHEBI:58818"/>
        <dbReference type="EC" id="2.2.1.9"/>
    </reaction>
</comment>
<comment type="cofactor">
    <cofactor evidence="1">
        <name>Mg(2+)</name>
        <dbReference type="ChEBI" id="CHEBI:18420"/>
    </cofactor>
    <cofactor evidence="1">
        <name>Mn(2+)</name>
        <dbReference type="ChEBI" id="CHEBI:29035"/>
    </cofactor>
</comment>
<comment type="cofactor">
    <cofactor evidence="1">
        <name>thiamine diphosphate</name>
        <dbReference type="ChEBI" id="CHEBI:58937"/>
    </cofactor>
    <text evidence="1">Binds 1 thiamine pyrophosphate per subunit.</text>
</comment>
<comment type="pathway">
    <text evidence="1">Quinol/quinone metabolism; 1,4-dihydroxy-2-naphthoate biosynthesis; 1,4-dihydroxy-2-naphthoate from chorismate: step 2/7.</text>
</comment>
<comment type="pathway">
    <text evidence="1">Quinol/quinone metabolism; menaquinone biosynthesis.</text>
</comment>
<comment type="subunit">
    <text evidence="1">Homodimer.</text>
</comment>
<comment type="similarity">
    <text evidence="1">Belongs to the TPP enzyme family. MenD subfamily.</text>
</comment>
<evidence type="ECO:0000255" key="1">
    <source>
        <dbReference type="HAMAP-Rule" id="MF_01659"/>
    </source>
</evidence>
<keyword id="KW-0460">Magnesium</keyword>
<keyword id="KW-0464">Manganese</keyword>
<keyword id="KW-0474">Menaquinone biosynthesis</keyword>
<keyword id="KW-0479">Metal-binding</keyword>
<keyword id="KW-1185">Reference proteome</keyword>
<keyword id="KW-0786">Thiamine pyrophosphate</keyword>
<keyword id="KW-0808">Transferase</keyword>
<reference key="1">
    <citation type="journal article" date="2007" name="Nat. Biotechnol.">
        <title>Complete genome sequence of the erythromycin-producing bacterium Saccharopolyspora erythraea NRRL23338.</title>
        <authorList>
            <person name="Oliynyk M."/>
            <person name="Samborskyy M."/>
            <person name="Lester J.B."/>
            <person name="Mironenko T."/>
            <person name="Scott N."/>
            <person name="Dickens S."/>
            <person name="Haydock S.F."/>
            <person name="Leadlay P.F."/>
        </authorList>
    </citation>
    <scope>NUCLEOTIDE SEQUENCE [LARGE SCALE GENOMIC DNA]</scope>
    <source>
        <strain>ATCC 11635 / DSM 40517 / JCM 4748 / NBRC 13426 / NCIMB 8594 / NRRL 2338</strain>
    </source>
</reference>
<protein>
    <recommendedName>
        <fullName evidence="1">2-succinyl-5-enolpyruvyl-6-hydroxy-3-cyclohexene-1-carboxylate synthase</fullName>
        <shortName evidence="1">SEPHCHC synthase</shortName>
        <ecNumber evidence="1">2.2.1.9</ecNumber>
    </recommendedName>
    <alternativeName>
        <fullName evidence="1">Menaquinone biosynthesis protein MenD</fullName>
    </alternativeName>
</protein>
<accession>A4FPV1</accession>
<sequence length="556" mass="59109">MNPSTAQAEVLVDELVRNGVRQVVLAPGSRNAPLSFALHDAAEAGRLDLHVRIDERSAGFLALGIATRTRRPVVVVCTSGTAATNLHPAVSEACHAGIPLIVLTADRPPELRAAGANQTIDQYRLYGTEVRLFDELAVAENRPGQNAYWRTQVCRAASMAAGTTWGGPVHLNLPFREPLVPSGDRDWCEPLDGRADGQRWTEVSGNESAPSTLSKVRSRRGLVLVADGGADSASAWGERYGWPVLSETGGVGLSGAAAISTGMWLLKLPGFMRDHRPEQVLCVGRNTVFRQVQSLLADSEVEVLLAHGGSHWPTPAHNVREVAETFGASPGPADPDWLTGWQQADQKASAALHAALDLERWPNGPVVARDVVDALPAGSLLVLGSSNPTRDVALAANHRPDVVVHRNRGVAGIDGTVSAAIGSALAHGGPSYALLGDLTFLHDSNGLMLGPQEQRPDLTIVVLNDDGGGIFSLLEQGSPEHRGSFERVFGTPHGTDIGSLCAAHGVEHTVVRQRSEFGVALRRRPGLRVVEVRADRAELRGVHERLHAAVRGALHG</sequence>